<reference key="1">
    <citation type="journal article" date="2001" name="DNA Res.">
        <title>Complete genome sequence of an aerobic thermoacidophilic Crenarchaeon, Sulfolobus tokodaii strain7.</title>
        <authorList>
            <person name="Kawarabayasi Y."/>
            <person name="Hino Y."/>
            <person name="Horikawa H."/>
            <person name="Jin-no K."/>
            <person name="Takahashi M."/>
            <person name="Sekine M."/>
            <person name="Baba S."/>
            <person name="Ankai A."/>
            <person name="Kosugi H."/>
            <person name="Hosoyama A."/>
            <person name="Fukui S."/>
            <person name="Nagai Y."/>
            <person name="Nishijima K."/>
            <person name="Otsuka R."/>
            <person name="Nakazawa H."/>
            <person name="Takamiya M."/>
            <person name="Kato Y."/>
            <person name="Yoshizawa T."/>
            <person name="Tanaka T."/>
            <person name="Kudoh Y."/>
            <person name="Yamazaki J."/>
            <person name="Kushida N."/>
            <person name="Oguchi A."/>
            <person name="Aoki K."/>
            <person name="Masuda S."/>
            <person name="Yanagii M."/>
            <person name="Nishimura M."/>
            <person name="Yamagishi A."/>
            <person name="Oshima T."/>
            <person name="Kikuchi H."/>
        </authorList>
    </citation>
    <scope>NUCLEOTIDE SEQUENCE [LARGE SCALE GENOMIC DNA]</scope>
    <source>
        <strain>DSM 16993 / JCM 10545 / NBRC 100140 / 7</strain>
    </source>
</reference>
<organism>
    <name type="scientific">Sulfurisphaera tokodaii (strain DSM 16993 / JCM 10545 / NBRC 100140 / 7)</name>
    <name type="common">Sulfolobus tokodaii</name>
    <dbReference type="NCBI Taxonomy" id="273063"/>
    <lineage>
        <taxon>Archaea</taxon>
        <taxon>Thermoproteota</taxon>
        <taxon>Thermoprotei</taxon>
        <taxon>Sulfolobales</taxon>
        <taxon>Sulfolobaceae</taxon>
        <taxon>Sulfurisphaera</taxon>
    </lineage>
</organism>
<keyword id="KW-1185">Reference proteome</keyword>
<keyword id="KW-0687">Ribonucleoprotein</keyword>
<keyword id="KW-0689">Ribosomal protein</keyword>
<gene>
    <name type="primary">rpl31e</name>
    <name type="ordered locus">STK_13724</name>
    <name type="ORF">STS168</name>
</gene>
<proteinExistence type="inferred from homology"/>
<sequence>MKEKDNFEMVINFKRAFMGRRNQRTKRAIKMIRNIVQRHFGAEKVIIDPLLAKSITYNGRDKIVRKVRVAVKKIGEKTYLVRLALKSE</sequence>
<name>RL31_SULTO</name>
<feature type="chain" id="PRO_0000153807" description="Large ribosomal subunit protein eL31">
    <location>
        <begin position="1"/>
        <end position="88"/>
    </location>
</feature>
<accession>Q971I2</accession>
<protein>
    <recommendedName>
        <fullName evidence="1">Large ribosomal subunit protein eL31</fullName>
    </recommendedName>
    <alternativeName>
        <fullName>50S ribosomal protein L31e</fullName>
    </alternativeName>
</protein>
<evidence type="ECO:0000305" key="1"/>
<comment type="similarity">
    <text evidence="1">Belongs to the eukaryotic ribosomal protein eL31 family.</text>
</comment>
<dbReference type="EMBL" id="BA000023">
    <property type="protein sequence ID" value="BAB66438.1"/>
    <property type="molecule type" value="Genomic_DNA"/>
</dbReference>
<dbReference type="RefSeq" id="WP_010979416.1">
    <property type="nucleotide sequence ID" value="NC_003106.2"/>
</dbReference>
<dbReference type="SMR" id="Q971I2"/>
<dbReference type="STRING" id="273063.STK_13724"/>
<dbReference type="KEGG" id="sto:STK_13724"/>
<dbReference type="PATRIC" id="fig|273063.9.peg.1570"/>
<dbReference type="eggNOG" id="arCOG04473">
    <property type="taxonomic scope" value="Archaea"/>
</dbReference>
<dbReference type="OrthoDB" id="36822at2157"/>
<dbReference type="Proteomes" id="UP000001015">
    <property type="component" value="Chromosome"/>
</dbReference>
<dbReference type="GO" id="GO:1990904">
    <property type="term" value="C:ribonucleoprotein complex"/>
    <property type="evidence" value="ECO:0007669"/>
    <property type="project" value="UniProtKB-KW"/>
</dbReference>
<dbReference type="GO" id="GO:0005840">
    <property type="term" value="C:ribosome"/>
    <property type="evidence" value="ECO:0007669"/>
    <property type="project" value="UniProtKB-KW"/>
</dbReference>
<dbReference type="GO" id="GO:0003735">
    <property type="term" value="F:structural constituent of ribosome"/>
    <property type="evidence" value="ECO:0007669"/>
    <property type="project" value="InterPro"/>
</dbReference>
<dbReference type="GO" id="GO:0006412">
    <property type="term" value="P:translation"/>
    <property type="evidence" value="ECO:0007669"/>
    <property type="project" value="UniProtKB-UniRule"/>
</dbReference>
<dbReference type="CDD" id="cd00463">
    <property type="entry name" value="Ribosomal_L31e"/>
    <property type="match status" value="1"/>
</dbReference>
<dbReference type="Gene3D" id="3.10.440.10">
    <property type="match status" value="1"/>
</dbReference>
<dbReference type="HAMAP" id="MF_00410">
    <property type="entry name" value="Ribosomal_eL31"/>
    <property type="match status" value="1"/>
</dbReference>
<dbReference type="InterPro" id="IPR000054">
    <property type="entry name" value="Ribosomal_eL31"/>
</dbReference>
<dbReference type="InterPro" id="IPR023621">
    <property type="entry name" value="Ribosomal_eL31_dom_sf"/>
</dbReference>
<dbReference type="NCBIfam" id="NF002258">
    <property type="entry name" value="PRK01192.1-1"/>
    <property type="match status" value="1"/>
</dbReference>
<dbReference type="Pfam" id="PF01198">
    <property type="entry name" value="Ribosomal_L31e"/>
    <property type="match status" value="1"/>
</dbReference>
<dbReference type="SMART" id="SM01380">
    <property type="entry name" value="Ribosomal_L31e"/>
    <property type="match status" value="1"/>
</dbReference>
<dbReference type="SUPFAM" id="SSF54575">
    <property type="entry name" value="Ribosomal protein L31e"/>
    <property type="match status" value="1"/>
</dbReference>